<evidence type="ECO:0000250" key="1">
    <source>
        <dbReference type="UniProtKB" id="O03042"/>
    </source>
</evidence>
<evidence type="ECO:0000255" key="2">
    <source>
        <dbReference type="HAMAP-Rule" id="MF_01338"/>
    </source>
</evidence>
<dbReference type="EC" id="4.1.1.39" evidence="2"/>
<dbReference type="EMBL" id="AP009374">
    <property type="protein sequence ID" value="BAF50469.1"/>
    <property type="molecule type" value="Genomic_DNA"/>
</dbReference>
<dbReference type="RefSeq" id="YP_001123645.1">
    <property type="nucleotide sequence ID" value="NC_009273.1"/>
</dbReference>
<dbReference type="SMR" id="A4QLB4"/>
<dbReference type="GeneID" id="4962040"/>
<dbReference type="GO" id="GO:0009507">
    <property type="term" value="C:chloroplast"/>
    <property type="evidence" value="ECO:0007669"/>
    <property type="project" value="UniProtKB-SubCell"/>
</dbReference>
<dbReference type="GO" id="GO:0000287">
    <property type="term" value="F:magnesium ion binding"/>
    <property type="evidence" value="ECO:0007669"/>
    <property type="project" value="UniProtKB-UniRule"/>
</dbReference>
<dbReference type="GO" id="GO:0004497">
    <property type="term" value="F:monooxygenase activity"/>
    <property type="evidence" value="ECO:0007669"/>
    <property type="project" value="UniProtKB-KW"/>
</dbReference>
<dbReference type="GO" id="GO:0016984">
    <property type="term" value="F:ribulose-bisphosphate carboxylase activity"/>
    <property type="evidence" value="ECO:0007669"/>
    <property type="project" value="UniProtKB-UniRule"/>
</dbReference>
<dbReference type="GO" id="GO:0009853">
    <property type="term" value="P:photorespiration"/>
    <property type="evidence" value="ECO:0007669"/>
    <property type="project" value="UniProtKB-KW"/>
</dbReference>
<dbReference type="GO" id="GO:0019253">
    <property type="term" value="P:reductive pentose-phosphate cycle"/>
    <property type="evidence" value="ECO:0007669"/>
    <property type="project" value="UniProtKB-UniRule"/>
</dbReference>
<dbReference type="CDD" id="cd08212">
    <property type="entry name" value="RuBisCO_large_I"/>
    <property type="match status" value="1"/>
</dbReference>
<dbReference type="FunFam" id="3.20.20.110:FF:000001">
    <property type="entry name" value="Ribulose bisphosphate carboxylase large chain"/>
    <property type="match status" value="1"/>
</dbReference>
<dbReference type="FunFam" id="3.30.70.150:FF:000001">
    <property type="entry name" value="Ribulose bisphosphate carboxylase large chain"/>
    <property type="match status" value="1"/>
</dbReference>
<dbReference type="Gene3D" id="3.20.20.110">
    <property type="entry name" value="Ribulose bisphosphate carboxylase, large subunit, C-terminal domain"/>
    <property type="match status" value="1"/>
</dbReference>
<dbReference type="Gene3D" id="3.30.70.150">
    <property type="entry name" value="RuBisCO large subunit, N-terminal domain"/>
    <property type="match status" value="1"/>
</dbReference>
<dbReference type="HAMAP" id="MF_01338">
    <property type="entry name" value="RuBisCO_L_type1"/>
    <property type="match status" value="1"/>
</dbReference>
<dbReference type="InterPro" id="IPR033966">
    <property type="entry name" value="RuBisCO"/>
</dbReference>
<dbReference type="InterPro" id="IPR020878">
    <property type="entry name" value="RuBisCo_large_chain_AS"/>
</dbReference>
<dbReference type="InterPro" id="IPR000685">
    <property type="entry name" value="RuBisCO_lsu_C"/>
</dbReference>
<dbReference type="InterPro" id="IPR036376">
    <property type="entry name" value="RuBisCO_lsu_C_sf"/>
</dbReference>
<dbReference type="InterPro" id="IPR017443">
    <property type="entry name" value="RuBisCO_lsu_fd_N"/>
</dbReference>
<dbReference type="InterPro" id="IPR036422">
    <property type="entry name" value="RuBisCO_lsu_N_sf"/>
</dbReference>
<dbReference type="InterPro" id="IPR020888">
    <property type="entry name" value="RuBisCO_lsuI"/>
</dbReference>
<dbReference type="NCBIfam" id="NF003252">
    <property type="entry name" value="PRK04208.1"/>
    <property type="match status" value="1"/>
</dbReference>
<dbReference type="PANTHER" id="PTHR42704">
    <property type="entry name" value="RIBULOSE BISPHOSPHATE CARBOXYLASE"/>
    <property type="match status" value="1"/>
</dbReference>
<dbReference type="PANTHER" id="PTHR42704:SF16">
    <property type="entry name" value="RIBULOSE BISPHOSPHATE CARBOXYLASE LARGE CHAIN"/>
    <property type="match status" value="1"/>
</dbReference>
<dbReference type="Pfam" id="PF00016">
    <property type="entry name" value="RuBisCO_large"/>
    <property type="match status" value="1"/>
</dbReference>
<dbReference type="Pfam" id="PF02788">
    <property type="entry name" value="RuBisCO_large_N"/>
    <property type="match status" value="1"/>
</dbReference>
<dbReference type="SFLD" id="SFLDG01052">
    <property type="entry name" value="RuBisCO"/>
    <property type="match status" value="1"/>
</dbReference>
<dbReference type="SFLD" id="SFLDS00014">
    <property type="entry name" value="RuBisCO"/>
    <property type="match status" value="1"/>
</dbReference>
<dbReference type="SFLD" id="SFLDG00301">
    <property type="entry name" value="RuBisCO-like_proteins"/>
    <property type="match status" value="1"/>
</dbReference>
<dbReference type="SUPFAM" id="SSF51649">
    <property type="entry name" value="RuBisCo, C-terminal domain"/>
    <property type="match status" value="1"/>
</dbReference>
<dbReference type="SUPFAM" id="SSF54966">
    <property type="entry name" value="RuBisCO, large subunit, small (N-terminal) domain"/>
    <property type="match status" value="1"/>
</dbReference>
<dbReference type="PROSITE" id="PS00157">
    <property type="entry name" value="RUBISCO_LARGE"/>
    <property type="match status" value="1"/>
</dbReference>
<sequence>MSPQTETKASVGFKAGVKEYKLTYYTPEYETKDTDILAAFRVTPQPGVPPEEAGAAVAAESSTGTWTTVWTDGLTSLDRYKGRCYHIEPVPGEETQFIAYVAYPLDLFEEGSVTNMFTSIVGNVFGFKALAALRLEDLRIPPAYTKTFQGPPHGIQVERDKLNKYGRPLLGCTIKPKLGLSAKNYGRAVYECLRGGLDFTKDDENVNSQPFMRWRDRFLFCAEAIYKSQAETGEIKGHYLNATAGTCEEMIKRAVFARELGVPIVMHDYLTGGFTANTSLAHYCRDNGLLLHIHRAMHAVIDRQKNHGMHFRVLAKALRLSGGDHIHAGTVVGKLEGDRESTLGFVDLLRDDYVEKDRSRGIFFTQDWVSLPGVLPVASGGIHVWHMPALTEIFGDDSVLHFGGGTLGHPWGNAPGAVANRVALEACVQARNEGRDLAVEGNEIVREACKWSPELAAACEVWKEIRFNFPTIDKLDGQ</sequence>
<organism>
    <name type="scientific">Lepidium virginicum</name>
    <name type="common">Virginia pepperweed</name>
    <dbReference type="NCBI Taxonomy" id="59292"/>
    <lineage>
        <taxon>Eukaryota</taxon>
        <taxon>Viridiplantae</taxon>
        <taxon>Streptophyta</taxon>
        <taxon>Embryophyta</taxon>
        <taxon>Tracheophyta</taxon>
        <taxon>Spermatophyta</taxon>
        <taxon>Magnoliopsida</taxon>
        <taxon>eudicotyledons</taxon>
        <taxon>Gunneridae</taxon>
        <taxon>Pentapetalae</taxon>
        <taxon>rosids</taxon>
        <taxon>malvids</taxon>
        <taxon>Brassicales</taxon>
        <taxon>Brassicaceae</taxon>
        <taxon>Lepidieae</taxon>
        <taxon>Lepidium</taxon>
    </lineage>
</organism>
<gene>
    <name evidence="2" type="primary">rbcL</name>
</gene>
<comment type="function">
    <text evidence="2">RuBisCO catalyzes two reactions: the carboxylation of D-ribulose 1,5-bisphosphate, the primary event in carbon dioxide fixation, as well as the oxidative fragmentation of the pentose substrate in the photorespiration process. Both reactions occur simultaneously and in competition at the same active site.</text>
</comment>
<comment type="catalytic activity">
    <reaction evidence="2">
        <text>2 (2R)-3-phosphoglycerate + 2 H(+) = D-ribulose 1,5-bisphosphate + CO2 + H2O</text>
        <dbReference type="Rhea" id="RHEA:23124"/>
        <dbReference type="ChEBI" id="CHEBI:15377"/>
        <dbReference type="ChEBI" id="CHEBI:15378"/>
        <dbReference type="ChEBI" id="CHEBI:16526"/>
        <dbReference type="ChEBI" id="CHEBI:57870"/>
        <dbReference type="ChEBI" id="CHEBI:58272"/>
        <dbReference type="EC" id="4.1.1.39"/>
    </reaction>
</comment>
<comment type="catalytic activity">
    <reaction evidence="2">
        <text>D-ribulose 1,5-bisphosphate + O2 = 2-phosphoglycolate + (2R)-3-phosphoglycerate + 2 H(+)</text>
        <dbReference type="Rhea" id="RHEA:36631"/>
        <dbReference type="ChEBI" id="CHEBI:15378"/>
        <dbReference type="ChEBI" id="CHEBI:15379"/>
        <dbReference type="ChEBI" id="CHEBI:57870"/>
        <dbReference type="ChEBI" id="CHEBI:58033"/>
        <dbReference type="ChEBI" id="CHEBI:58272"/>
    </reaction>
</comment>
<comment type="cofactor">
    <cofactor evidence="2">
        <name>Mg(2+)</name>
        <dbReference type="ChEBI" id="CHEBI:18420"/>
    </cofactor>
    <text evidence="2">Binds 1 Mg(2+) ion per subunit.</text>
</comment>
<comment type="subunit">
    <text evidence="2">Heterohexadecamer of 8 large chains and 8 small chains; disulfide-linked. The disulfide link is formed within the large subunit homodimers.</text>
</comment>
<comment type="subcellular location">
    <subcellularLocation>
        <location>Plastid</location>
        <location>Chloroplast</location>
    </subcellularLocation>
</comment>
<comment type="PTM">
    <text evidence="2">The disulfide bond which can form in the large chain dimeric partners within the hexadecamer appears to be associated with oxidative stress and protein turnover.</text>
</comment>
<comment type="miscellaneous">
    <text evidence="2">The basic functional RuBisCO is composed of a large chain homodimer in a 'head-to-tail' conformation. In form I RuBisCO this homodimer is arranged in a barrel-like tetramer with the small subunits forming a tetrameric 'cap' on each end of the 'barrel'.</text>
</comment>
<comment type="similarity">
    <text evidence="2">Belongs to the RuBisCO large chain family. Type I subfamily.</text>
</comment>
<proteinExistence type="inferred from homology"/>
<protein>
    <recommendedName>
        <fullName evidence="2">Ribulose bisphosphate carboxylase large chain</fullName>
        <shortName evidence="2">RuBisCO large subunit</shortName>
        <ecNumber evidence="2">4.1.1.39</ecNumber>
    </recommendedName>
</protein>
<reference key="1">
    <citation type="submission" date="2007-03" db="EMBL/GenBank/DDBJ databases">
        <title>Sequencing analysis of Lepidium virginicum JO26 chloroplast DNA.</title>
        <authorList>
            <person name="Hosouchi T."/>
            <person name="Tsuruoka H."/>
            <person name="Kotani H."/>
        </authorList>
    </citation>
    <scope>NUCLEOTIDE SEQUENCE [LARGE SCALE GENOMIC DNA]</scope>
</reference>
<keyword id="KW-0113">Calvin cycle</keyword>
<keyword id="KW-0120">Carbon dioxide fixation</keyword>
<keyword id="KW-0150">Chloroplast</keyword>
<keyword id="KW-1015">Disulfide bond</keyword>
<keyword id="KW-0456">Lyase</keyword>
<keyword id="KW-0460">Magnesium</keyword>
<keyword id="KW-0479">Metal-binding</keyword>
<keyword id="KW-0503">Monooxygenase</keyword>
<keyword id="KW-0560">Oxidoreductase</keyword>
<keyword id="KW-0597">Phosphoprotein</keyword>
<keyword id="KW-0601">Photorespiration</keyword>
<keyword id="KW-0602">Photosynthesis</keyword>
<keyword id="KW-0934">Plastid</keyword>
<accession>A4QLB4</accession>
<feature type="propeptide" id="PRO_0000299999" evidence="2">
    <location>
        <begin position="1"/>
        <end position="2"/>
    </location>
</feature>
<feature type="chain" id="PRO_0000300000" description="Ribulose bisphosphate carboxylase large chain">
    <location>
        <begin position="3"/>
        <end position="478"/>
    </location>
</feature>
<feature type="active site" description="Proton acceptor" evidence="2">
    <location>
        <position position="175"/>
    </location>
</feature>
<feature type="active site" description="Proton acceptor" evidence="2">
    <location>
        <position position="294"/>
    </location>
</feature>
<feature type="binding site" description="in homodimeric partner" evidence="2">
    <location>
        <position position="123"/>
    </location>
    <ligand>
        <name>substrate</name>
    </ligand>
</feature>
<feature type="binding site" evidence="2">
    <location>
        <position position="173"/>
    </location>
    <ligand>
        <name>substrate</name>
    </ligand>
</feature>
<feature type="binding site" evidence="2">
    <location>
        <position position="177"/>
    </location>
    <ligand>
        <name>substrate</name>
    </ligand>
</feature>
<feature type="binding site" description="via carbamate group" evidence="2">
    <location>
        <position position="201"/>
    </location>
    <ligand>
        <name>Mg(2+)</name>
        <dbReference type="ChEBI" id="CHEBI:18420"/>
    </ligand>
</feature>
<feature type="binding site" evidence="2">
    <location>
        <position position="203"/>
    </location>
    <ligand>
        <name>Mg(2+)</name>
        <dbReference type="ChEBI" id="CHEBI:18420"/>
    </ligand>
</feature>
<feature type="binding site" evidence="2">
    <location>
        <position position="204"/>
    </location>
    <ligand>
        <name>Mg(2+)</name>
        <dbReference type="ChEBI" id="CHEBI:18420"/>
    </ligand>
</feature>
<feature type="binding site" evidence="2">
    <location>
        <position position="295"/>
    </location>
    <ligand>
        <name>substrate</name>
    </ligand>
</feature>
<feature type="binding site" evidence="2">
    <location>
        <position position="327"/>
    </location>
    <ligand>
        <name>substrate</name>
    </ligand>
</feature>
<feature type="binding site" evidence="2">
    <location>
        <position position="379"/>
    </location>
    <ligand>
        <name>substrate</name>
    </ligand>
</feature>
<feature type="site" description="Transition state stabilizer" evidence="2">
    <location>
        <position position="334"/>
    </location>
</feature>
<feature type="modified residue" description="N6-carboxylysine" evidence="2">
    <location>
        <position position="201"/>
    </location>
</feature>
<feature type="modified residue" description="Phosphoserine" evidence="1">
    <location>
        <position position="208"/>
    </location>
</feature>
<feature type="modified residue" description="Phosphothreonine" evidence="1">
    <location>
        <position position="330"/>
    </location>
</feature>
<feature type="disulfide bond" description="Interchain; in linked form" evidence="2">
    <location>
        <position position="247"/>
    </location>
</feature>
<geneLocation type="chloroplast"/>
<name>RBL_LEPVR</name>